<keyword id="KW-0028">Amino-acid biosynthesis</keyword>
<keyword id="KW-0032">Aminotransferase</keyword>
<keyword id="KW-0963">Cytoplasm</keyword>
<keyword id="KW-0663">Pyridoxal phosphate</keyword>
<keyword id="KW-0664">Pyridoxine biosynthesis</keyword>
<keyword id="KW-0718">Serine biosynthesis</keyword>
<keyword id="KW-0808">Transferase</keyword>
<name>SERC_CAMJJ</name>
<dbReference type="EC" id="2.6.1.52" evidence="1"/>
<dbReference type="EMBL" id="CP000538">
    <property type="protein sequence ID" value="EAQ72981.1"/>
    <property type="molecule type" value="Genomic_DNA"/>
</dbReference>
<dbReference type="RefSeq" id="WP_002868752.1">
    <property type="nucleotide sequence ID" value="NC_008787.1"/>
</dbReference>
<dbReference type="SMR" id="A1VY45"/>
<dbReference type="KEGG" id="cjj:CJJ81176_0348"/>
<dbReference type="eggNOG" id="COG1932">
    <property type="taxonomic scope" value="Bacteria"/>
</dbReference>
<dbReference type="HOGENOM" id="CLU_034866_0_2_7"/>
<dbReference type="UniPathway" id="UPA00135">
    <property type="reaction ID" value="UER00197"/>
</dbReference>
<dbReference type="UniPathway" id="UPA00244">
    <property type="reaction ID" value="UER00311"/>
</dbReference>
<dbReference type="Proteomes" id="UP000000646">
    <property type="component" value="Chromosome"/>
</dbReference>
<dbReference type="GO" id="GO:0005737">
    <property type="term" value="C:cytoplasm"/>
    <property type="evidence" value="ECO:0007669"/>
    <property type="project" value="UniProtKB-SubCell"/>
</dbReference>
<dbReference type="GO" id="GO:0004648">
    <property type="term" value="F:O-phospho-L-serine:2-oxoglutarate aminotransferase activity"/>
    <property type="evidence" value="ECO:0007669"/>
    <property type="project" value="UniProtKB-UniRule"/>
</dbReference>
<dbReference type="GO" id="GO:0030170">
    <property type="term" value="F:pyridoxal phosphate binding"/>
    <property type="evidence" value="ECO:0007669"/>
    <property type="project" value="UniProtKB-UniRule"/>
</dbReference>
<dbReference type="GO" id="GO:0006564">
    <property type="term" value="P:L-serine biosynthetic process"/>
    <property type="evidence" value="ECO:0007669"/>
    <property type="project" value="UniProtKB-UniRule"/>
</dbReference>
<dbReference type="GO" id="GO:0008615">
    <property type="term" value="P:pyridoxine biosynthetic process"/>
    <property type="evidence" value="ECO:0007669"/>
    <property type="project" value="UniProtKB-UniRule"/>
</dbReference>
<dbReference type="CDD" id="cd00611">
    <property type="entry name" value="PSAT_like"/>
    <property type="match status" value="1"/>
</dbReference>
<dbReference type="FunFam" id="3.40.640.10:FF:000010">
    <property type="entry name" value="Phosphoserine aminotransferase"/>
    <property type="match status" value="1"/>
</dbReference>
<dbReference type="FunFam" id="3.90.1150.10:FF:000006">
    <property type="entry name" value="Phosphoserine aminotransferase"/>
    <property type="match status" value="1"/>
</dbReference>
<dbReference type="Gene3D" id="3.90.1150.10">
    <property type="entry name" value="Aspartate Aminotransferase, domain 1"/>
    <property type="match status" value="1"/>
</dbReference>
<dbReference type="Gene3D" id="3.40.640.10">
    <property type="entry name" value="Type I PLP-dependent aspartate aminotransferase-like (Major domain)"/>
    <property type="match status" value="1"/>
</dbReference>
<dbReference type="HAMAP" id="MF_00160">
    <property type="entry name" value="SerC_aminotrans_5"/>
    <property type="match status" value="1"/>
</dbReference>
<dbReference type="InterPro" id="IPR000192">
    <property type="entry name" value="Aminotrans_V_dom"/>
</dbReference>
<dbReference type="InterPro" id="IPR022278">
    <property type="entry name" value="Pser_aminoTfrase"/>
</dbReference>
<dbReference type="InterPro" id="IPR015424">
    <property type="entry name" value="PyrdxlP-dep_Trfase"/>
</dbReference>
<dbReference type="InterPro" id="IPR015421">
    <property type="entry name" value="PyrdxlP-dep_Trfase_major"/>
</dbReference>
<dbReference type="InterPro" id="IPR015422">
    <property type="entry name" value="PyrdxlP-dep_Trfase_small"/>
</dbReference>
<dbReference type="NCBIfam" id="NF003764">
    <property type="entry name" value="PRK05355.1"/>
    <property type="match status" value="1"/>
</dbReference>
<dbReference type="NCBIfam" id="TIGR01364">
    <property type="entry name" value="serC_1"/>
    <property type="match status" value="1"/>
</dbReference>
<dbReference type="PANTHER" id="PTHR43247">
    <property type="entry name" value="PHOSPHOSERINE AMINOTRANSFERASE"/>
    <property type="match status" value="1"/>
</dbReference>
<dbReference type="PANTHER" id="PTHR43247:SF1">
    <property type="entry name" value="PHOSPHOSERINE AMINOTRANSFERASE"/>
    <property type="match status" value="1"/>
</dbReference>
<dbReference type="Pfam" id="PF00266">
    <property type="entry name" value="Aminotran_5"/>
    <property type="match status" value="1"/>
</dbReference>
<dbReference type="PIRSF" id="PIRSF000525">
    <property type="entry name" value="SerC"/>
    <property type="match status" value="1"/>
</dbReference>
<dbReference type="SUPFAM" id="SSF53383">
    <property type="entry name" value="PLP-dependent transferases"/>
    <property type="match status" value="1"/>
</dbReference>
<proteinExistence type="inferred from homology"/>
<feature type="chain" id="PRO_1000058208" description="Phosphoserine aminotransferase">
    <location>
        <begin position="1"/>
        <end position="358"/>
    </location>
</feature>
<feature type="binding site" evidence="1">
    <location>
        <position position="41"/>
    </location>
    <ligand>
        <name>L-glutamate</name>
        <dbReference type="ChEBI" id="CHEBI:29985"/>
    </ligand>
</feature>
<feature type="binding site" evidence="1">
    <location>
        <begin position="75"/>
        <end position="76"/>
    </location>
    <ligand>
        <name>pyridoxal 5'-phosphate</name>
        <dbReference type="ChEBI" id="CHEBI:597326"/>
    </ligand>
</feature>
<feature type="binding site" evidence="1">
    <location>
        <position position="100"/>
    </location>
    <ligand>
        <name>pyridoxal 5'-phosphate</name>
        <dbReference type="ChEBI" id="CHEBI:597326"/>
    </ligand>
</feature>
<feature type="binding site" evidence="1">
    <location>
        <position position="148"/>
    </location>
    <ligand>
        <name>pyridoxal 5'-phosphate</name>
        <dbReference type="ChEBI" id="CHEBI:597326"/>
    </ligand>
</feature>
<feature type="binding site" evidence="1">
    <location>
        <position position="167"/>
    </location>
    <ligand>
        <name>pyridoxal 5'-phosphate</name>
        <dbReference type="ChEBI" id="CHEBI:597326"/>
    </ligand>
</feature>
<feature type="binding site" evidence="1">
    <location>
        <position position="190"/>
    </location>
    <ligand>
        <name>pyridoxal 5'-phosphate</name>
        <dbReference type="ChEBI" id="CHEBI:597326"/>
    </ligand>
</feature>
<feature type="binding site" evidence="1">
    <location>
        <begin position="233"/>
        <end position="234"/>
    </location>
    <ligand>
        <name>pyridoxal 5'-phosphate</name>
        <dbReference type="ChEBI" id="CHEBI:597326"/>
    </ligand>
</feature>
<feature type="modified residue" description="N6-(pyridoxal phosphate)lysine" evidence="1">
    <location>
        <position position="191"/>
    </location>
</feature>
<gene>
    <name evidence="1" type="primary">serC</name>
    <name type="ordered locus">CJJ81176_0348</name>
</gene>
<reference key="1">
    <citation type="submission" date="2006-12" db="EMBL/GenBank/DDBJ databases">
        <authorList>
            <person name="Fouts D.E."/>
            <person name="Nelson K.E."/>
            <person name="Sebastian Y."/>
        </authorList>
    </citation>
    <scope>NUCLEOTIDE SEQUENCE [LARGE SCALE GENOMIC DNA]</scope>
    <source>
        <strain>81-176</strain>
    </source>
</reference>
<comment type="function">
    <text evidence="1">Catalyzes the reversible conversion of 3-phosphohydroxypyruvate to phosphoserine and of 3-hydroxy-2-oxo-4-phosphonooxybutanoate to phosphohydroxythreonine.</text>
</comment>
<comment type="catalytic activity">
    <reaction evidence="1">
        <text>O-phospho-L-serine + 2-oxoglutarate = 3-phosphooxypyruvate + L-glutamate</text>
        <dbReference type="Rhea" id="RHEA:14329"/>
        <dbReference type="ChEBI" id="CHEBI:16810"/>
        <dbReference type="ChEBI" id="CHEBI:18110"/>
        <dbReference type="ChEBI" id="CHEBI:29985"/>
        <dbReference type="ChEBI" id="CHEBI:57524"/>
        <dbReference type="EC" id="2.6.1.52"/>
    </reaction>
</comment>
<comment type="catalytic activity">
    <reaction evidence="1">
        <text>4-(phosphooxy)-L-threonine + 2-oxoglutarate = (R)-3-hydroxy-2-oxo-4-phosphooxybutanoate + L-glutamate</text>
        <dbReference type="Rhea" id="RHEA:16573"/>
        <dbReference type="ChEBI" id="CHEBI:16810"/>
        <dbReference type="ChEBI" id="CHEBI:29985"/>
        <dbReference type="ChEBI" id="CHEBI:58452"/>
        <dbReference type="ChEBI" id="CHEBI:58538"/>
        <dbReference type="EC" id="2.6.1.52"/>
    </reaction>
</comment>
<comment type="cofactor">
    <cofactor evidence="1">
        <name>pyridoxal 5'-phosphate</name>
        <dbReference type="ChEBI" id="CHEBI:597326"/>
    </cofactor>
    <text evidence="1">Binds 1 pyridoxal phosphate per subunit.</text>
</comment>
<comment type="pathway">
    <text evidence="1">Amino-acid biosynthesis; L-serine biosynthesis; L-serine from 3-phospho-D-glycerate: step 2/3.</text>
</comment>
<comment type="pathway">
    <text evidence="1">Cofactor biosynthesis; pyridoxine 5'-phosphate biosynthesis; pyridoxine 5'-phosphate from D-erythrose 4-phosphate: step 3/5.</text>
</comment>
<comment type="subunit">
    <text evidence="1">Homodimer.</text>
</comment>
<comment type="subcellular location">
    <subcellularLocation>
        <location evidence="1">Cytoplasm</location>
    </subcellularLocation>
</comment>
<comment type="similarity">
    <text evidence="1">Belongs to the class-V pyridoxal-phosphate-dependent aminotransferase family. SerC subfamily.</text>
</comment>
<organism>
    <name type="scientific">Campylobacter jejuni subsp. jejuni serotype O:23/36 (strain 81-176)</name>
    <dbReference type="NCBI Taxonomy" id="354242"/>
    <lineage>
        <taxon>Bacteria</taxon>
        <taxon>Pseudomonadati</taxon>
        <taxon>Campylobacterota</taxon>
        <taxon>Epsilonproteobacteria</taxon>
        <taxon>Campylobacterales</taxon>
        <taxon>Campylobacteraceae</taxon>
        <taxon>Campylobacter</taxon>
    </lineage>
</organism>
<accession>A1VY45</accession>
<protein>
    <recommendedName>
        <fullName evidence="1">Phosphoserine aminotransferase</fullName>
        <ecNumber evidence="1">2.6.1.52</ecNumber>
    </recommendedName>
    <alternativeName>
        <fullName evidence="1">Phosphohydroxythreonine aminotransferase</fullName>
        <shortName evidence="1">PSAT</shortName>
    </alternativeName>
</protein>
<evidence type="ECO:0000255" key="1">
    <source>
        <dbReference type="HAMAP-Rule" id="MF_00160"/>
    </source>
</evidence>
<sequence length="358" mass="40466">MRKINFSAGPSTLPLEILEQAQKELCDYQGRGYSIMEISHRTKVFEEVHFGAQEKAKKLYGLNDDYEVLFLQGGASLQFAMIPMNLALNGVCEYANTGVWTKKAIKEAQILGVNVKTVASSEESNFNHIPRVEFRDNADYAYICSNNTIYGTQYQNYPKTKTPLIVDASSDFFSRKVDFSNIALFYGGVQKNAGISGLSCIFIRKDMLERSKNKQIPSMLNYLTHAENQSLFNTPPTFAIYMFNLEMDWLLNQGGLDKVHEKNSQKAAMLYECIDLSNGFYKGHADKKDRSLMNVSFNIAKNKDLEPLFVKEAEEAGMIGLKGHRILGGIRASIYNALNLDQIKTLCEFMKEFQGKYA</sequence>